<dbReference type="EMBL" id="AM295250">
    <property type="protein sequence ID" value="CAL28186.1"/>
    <property type="molecule type" value="Genomic_DNA"/>
</dbReference>
<dbReference type="RefSeq" id="WP_015900526.1">
    <property type="nucleotide sequence ID" value="NC_012121.1"/>
</dbReference>
<dbReference type="SMR" id="B9DNC0"/>
<dbReference type="GeneID" id="93793704"/>
<dbReference type="KEGG" id="sca:SCA_1280"/>
<dbReference type="eggNOG" id="COG1219">
    <property type="taxonomic scope" value="Bacteria"/>
</dbReference>
<dbReference type="HOGENOM" id="CLU_014218_8_2_9"/>
<dbReference type="OrthoDB" id="9804062at2"/>
<dbReference type="BioCyc" id="SCAR396513:SCA_RS06385-MONOMER"/>
<dbReference type="Proteomes" id="UP000000444">
    <property type="component" value="Chromosome"/>
</dbReference>
<dbReference type="GO" id="GO:0009376">
    <property type="term" value="C:HslUV protease complex"/>
    <property type="evidence" value="ECO:0007669"/>
    <property type="project" value="TreeGrafter"/>
</dbReference>
<dbReference type="GO" id="GO:0005524">
    <property type="term" value="F:ATP binding"/>
    <property type="evidence" value="ECO:0007669"/>
    <property type="project" value="UniProtKB-UniRule"/>
</dbReference>
<dbReference type="GO" id="GO:0016887">
    <property type="term" value="F:ATP hydrolysis activity"/>
    <property type="evidence" value="ECO:0007669"/>
    <property type="project" value="InterPro"/>
</dbReference>
<dbReference type="GO" id="GO:0140662">
    <property type="term" value="F:ATP-dependent protein folding chaperone"/>
    <property type="evidence" value="ECO:0007669"/>
    <property type="project" value="InterPro"/>
</dbReference>
<dbReference type="GO" id="GO:0046983">
    <property type="term" value="F:protein dimerization activity"/>
    <property type="evidence" value="ECO:0007669"/>
    <property type="project" value="InterPro"/>
</dbReference>
<dbReference type="GO" id="GO:0051082">
    <property type="term" value="F:unfolded protein binding"/>
    <property type="evidence" value="ECO:0007669"/>
    <property type="project" value="UniProtKB-UniRule"/>
</dbReference>
<dbReference type="GO" id="GO:0008270">
    <property type="term" value="F:zinc ion binding"/>
    <property type="evidence" value="ECO:0007669"/>
    <property type="project" value="InterPro"/>
</dbReference>
<dbReference type="GO" id="GO:0051301">
    <property type="term" value="P:cell division"/>
    <property type="evidence" value="ECO:0007669"/>
    <property type="project" value="TreeGrafter"/>
</dbReference>
<dbReference type="GO" id="GO:0051603">
    <property type="term" value="P:proteolysis involved in protein catabolic process"/>
    <property type="evidence" value="ECO:0007669"/>
    <property type="project" value="TreeGrafter"/>
</dbReference>
<dbReference type="CDD" id="cd19497">
    <property type="entry name" value="RecA-like_ClpX"/>
    <property type="match status" value="1"/>
</dbReference>
<dbReference type="FunFam" id="1.10.8.60:FF:000002">
    <property type="entry name" value="ATP-dependent Clp protease ATP-binding subunit ClpX"/>
    <property type="match status" value="1"/>
</dbReference>
<dbReference type="FunFam" id="3.40.50.300:FF:000005">
    <property type="entry name" value="ATP-dependent Clp protease ATP-binding subunit ClpX"/>
    <property type="match status" value="1"/>
</dbReference>
<dbReference type="Gene3D" id="1.10.8.60">
    <property type="match status" value="1"/>
</dbReference>
<dbReference type="Gene3D" id="6.20.220.10">
    <property type="entry name" value="ClpX chaperone, C4-type zinc finger domain"/>
    <property type="match status" value="1"/>
</dbReference>
<dbReference type="Gene3D" id="3.40.50.300">
    <property type="entry name" value="P-loop containing nucleotide triphosphate hydrolases"/>
    <property type="match status" value="1"/>
</dbReference>
<dbReference type="HAMAP" id="MF_00175">
    <property type="entry name" value="ClpX"/>
    <property type="match status" value="1"/>
</dbReference>
<dbReference type="InterPro" id="IPR003593">
    <property type="entry name" value="AAA+_ATPase"/>
</dbReference>
<dbReference type="InterPro" id="IPR050052">
    <property type="entry name" value="ATP-dep_Clp_protease_ClpX"/>
</dbReference>
<dbReference type="InterPro" id="IPR003959">
    <property type="entry name" value="ATPase_AAA_core"/>
</dbReference>
<dbReference type="InterPro" id="IPR019489">
    <property type="entry name" value="Clp_ATPase_C"/>
</dbReference>
<dbReference type="InterPro" id="IPR004487">
    <property type="entry name" value="Clp_protease_ATP-bd_su_ClpX"/>
</dbReference>
<dbReference type="InterPro" id="IPR046425">
    <property type="entry name" value="ClpX_bact"/>
</dbReference>
<dbReference type="InterPro" id="IPR027417">
    <property type="entry name" value="P-loop_NTPase"/>
</dbReference>
<dbReference type="InterPro" id="IPR010603">
    <property type="entry name" value="Znf_CppX_C4"/>
</dbReference>
<dbReference type="InterPro" id="IPR038366">
    <property type="entry name" value="Znf_CppX_C4_sf"/>
</dbReference>
<dbReference type="NCBIfam" id="TIGR00382">
    <property type="entry name" value="clpX"/>
    <property type="match status" value="1"/>
</dbReference>
<dbReference type="NCBIfam" id="NF003745">
    <property type="entry name" value="PRK05342.1"/>
    <property type="match status" value="1"/>
</dbReference>
<dbReference type="PANTHER" id="PTHR48102:SF7">
    <property type="entry name" value="ATP-DEPENDENT CLP PROTEASE ATP-BINDING SUBUNIT CLPX-LIKE, MITOCHONDRIAL"/>
    <property type="match status" value="1"/>
</dbReference>
<dbReference type="PANTHER" id="PTHR48102">
    <property type="entry name" value="ATP-DEPENDENT CLP PROTEASE ATP-BINDING SUBUNIT CLPX-LIKE, MITOCHONDRIAL-RELATED"/>
    <property type="match status" value="1"/>
</dbReference>
<dbReference type="Pfam" id="PF07724">
    <property type="entry name" value="AAA_2"/>
    <property type="match status" value="1"/>
</dbReference>
<dbReference type="Pfam" id="PF10431">
    <property type="entry name" value="ClpB_D2-small"/>
    <property type="match status" value="1"/>
</dbReference>
<dbReference type="Pfam" id="PF06689">
    <property type="entry name" value="zf-C4_ClpX"/>
    <property type="match status" value="1"/>
</dbReference>
<dbReference type="SMART" id="SM00382">
    <property type="entry name" value="AAA"/>
    <property type="match status" value="1"/>
</dbReference>
<dbReference type="SMART" id="SM01086">
    <property type="entry name" value="ClpB_D2-small"/>
    <property type="match status" value="1"/>
</dbReference>
<dbReference type="SMART" id="SM00994">
    <property type="entry name" value="zf-C4_ClpX"/>
    <property type="match status" value="1"/>
</dbReference>
<dbReference type="SUPFAM" id="SSF57716">
    <property type="entry name" value="Glucocorticoid receptor-like (DNA-binding domain)"/>
    <property type="match status" value="1"/>
</dbReference>
<dbReference type="SUPFAM" id="SSF52540">
    <property type="entry name" value="P-loop containing nucleoside triphosphate hydrolases"/>
    <property type="match status" value="1"/>
</dbReference>
<dbReference type="PROSITE" id="PS51902">
    <property type="entry name" value="CLPX_ZB"/>
    <property type="match status" value="1"/>
</dbReference>
<reference key="1">
    <citation type="journal article" date="2009" name="Appl. Environ. Microbiol.">
        <title>Genome analysis of the meat starter culture bacterium Staphylococcus carnosus TM300.</title>
        <authorList>
            <person name="Rosenstein R."/>
            <person name="Nerz C."/>
            <person name="Biswas L."/>
            <person name="Resch A."/>
            <person name="Raddatz G."/>
            <person name="Schuster S.C."/>
            <person name="Goetz F."/>
        </authorList>
    </citation>
    <scope>NUCLEOTIDE SEQUENCE [LARGE SCALE GENOMIC DNA]</scope>
    <source>
        <strain>TM300</strain>
    </source>
</reference>
<comment type="function">
    <text evidence="1">ATP-dependent specificity component of the Clp protease. It directs the protease to specific substrates. Can perform chaperone functions in the absence of ClpP.</text>
</comment>
<comment type="subunit">
    <text evidence="1">Component of the ClpX-ClpP complex. Forms a hexameric ring that, in the presence of ATP, binds to fourteen ClpP subunits assembled into a disk-like structure with a central cavity, resembling the structure of eukaryotic proteasomes.</text>
</comment>
<comment type="similarity">
    <text evidence="1">Belongs to the ClpX chaperone family.</text>
</comment>
<evidence type="ECO:0000255" key="1">
    <source>
        <dbReference type="HAMAP-Rule" id="MF_00175"/>
    </source>
</evidence>
<evidence type="ECO:0000255" key="2">
    <source>
        <dbReference type="PROSITE-ProRule" id="PRU01250"/>
    </source>
</evidence>
<protein>
    <recommendedName>
        <fullName evidence="1">ATP-dependent Clp protease ATP-binding subunit ClpX</fullName>
    </recommendedName>
</protein>
<keyword id="KW-0067">ATP-binding</keyword>
<keyword id="KW-0143">Chaperone</keyword>
<keyword id="KW-0479">Metal-binding</keyword>
<keyword id="KW-0547">Nucleotide-binding</keyword>
<keyword id="KW-1185">Reference proteome</keyword>
<keyword id="KW-0862">Zinc</keyword>
<proteinExistence type="inferred from homology"/>
<gene>
    <name evidence="1" type="primary">clpX</name>
    <name type="ordered locus">Sca_1280</name>
</gene>
<accession>B9DNC0</accession>
<feature type="chain" id="PRO_1000123850" description="ATP-dependent Clp protease ATP-binding subunit ClpX">
    <location>
        <begin position="1"/>
        <end position="420"/>
    </location>
</feature>
<feature type="domain" description="ClpX-type ZB" evidence="2">
    <location>
        <begin position="1"/>
        <end position="54"/>
    </location>
</feature>
<feature type="binding site" evidence="2">
    <location>
        <position position="13"/>
    </location>
    <ligand>
        <name>Zn(2+)</name>
        <dbReference type="ChEBI" id="CHEBI:29105"/>
    </ligand>
</feature>
<feature type="binding site" evidence="2">
    <location>
        <position position="16"/>
    </location>
    <ligand>
        <name>Zn(2+)</name>
        <dbReference type="ChEBI" id="CHEBI:29105"/>
    </ligand>
</feature>
<feature type="binding site" evidence="2">
    <location>
        <position position="35"/>
    </location>
    <ligand>
        <name>Zn(2+)</name>
        <dbReference type="ChEBI" id="CHEBI:29105"/>
    </ligand>
</feature>
<feature type="binding site" evidence="2">
    <location>
        <position position="38"/>
    </location>
    <ligand>
        <name>Zn(2+)</name>
        <dbReference type="ChEBI" id="CHEBI:29105"/>
    </ligand>
</feature>
<feature type="binding site" evidence="1">
    <location>
        <begin position="118"/>
        <end position="125"/>
    </location>
    <ligand>
        <name>ATP</name>
        <dbReference type="ChEBI" id="CHEBI:30616"/>
    </ligand>
</feature>
<sequence length="420" mass="46350">MFKFNEDEEKLKCSFCGKDQDQVKKLVAGSGVYICNECIELCSEIVEEELAQTATEEFTDLPTPKEIMDQLNNYVIGQDKAKKSLSVAVYNHYKRIQQLGPKDNEVELQKSNVALIGPTGSGKTLLAQTLAKTLNVPFAIADATSLTEAGYVGEDVENILLRLIQAADFDIDKAEKGIIYVDEIDKIARKSENTSITRDVSGEGVQQALLKILEGTTASVPPQGGRKHPNQEFIQIDTTNILFILGGAFDGIDEVIKRRLGEKVIGFASNEAAKYDESALLEHIRPEDLQSYGLIPEFIGRIPIVANLETLDIAALKNILTQPKNALVKQYKKMLELDHVELEFTEEALTAIAEKAIERKTGARGLRSIIEESLIEIMYDIPSSDDVAKVVITDNTINNEANPELYDAEGNEVNLEKTSA</sequence>
<organism>
    <name type="scientific">Staphylococcus carnosus (strain TM300)</name>
    <dbReference type="NCBI Taxonomy" id="396513"/>
    <lineage>
        <taxon>Bacteria</taxon>
        <taxon>Bacillati</taxon>
        <taxon>Bacillota</taxon>
        <taxon>Bacilli</taxon>
        <taxon>Bacillales</taxon>
        <taxon>Staphylococcaceae</taxon>
        <taxon>Staphylococcus</taxon>
    </lineage>
</organism>
<name>CLPX_STACT</name>